<comment type="function">
    <text evidence="1">Part of the phosphoribosylformylglycinamidine synthase complex involved in the purines biosynthetic pathway. Catalyzes the ATP-dependent conversion of formylglycinamide ribonucleotide (FGAR) and glutamine to yield formylglycinamidine ribonucleotide (FGAM) and glutamate. The FGAM synthase complex is composed of three subunits. PurQ produces an ammonia molecule by converting glutamine to glutamate. PurL transfers the ammonia molecule to FGAR to form FGAM in an ATP-dependent manner. PurS interacts with PurQ and PurL and is thought to assist in the transfer of the ammonia molecule from PurQ to PurL.</text>
</comment>
<comment type="catalytic activity">
    <reaction evidence="1">
        <text>N(2)-formyl-N(1)-(5-phospho-beta-D-ribosyl)glycinamide + L-glutamine + ATP + H2O = 2-formamido-N(1)-(5-O-phospho-beta-D-ribosyl)acetamidine + L-glutamate + ADP + phosphate + H(+)</text>
        <dbReference type="Rhea" id="RHEA:17129"/>
        <dbReference type="ChEBI" id="CHEBI:15377"/>
        <dbReference type="ChEBI" id="CHEBI:15378"/>
        <dbReference type="ChEBI" id="CHEBI:29985"/>
        <dbReference type="ChEBI" id="CHEBI:30616"/>
        <dbReference type="ChEBI" id="CHEBI:43474"/>
        <dbReference type="ChEBI" id="CHEBI:58359"/>
        <dbReference type="ChEBI" id="CHEBI:147286"/>
        <dbReference type="ChEBI" id="CHEBI:147287"/>
        <dbReference type="ChEBI" id="CHEBI:456216"/>
        <dbReference type="EC" id="6.3.5.3"/>
    </reaction>
</comment>
<comment type="catalytic activity">
    <reaction evidence="1">
        <text>L-glutamine + H2O = L-glutamate + NH4(+)</text>
        <dbReference type="Rhea" id="RHEA:15889"/>
        <dbReference type="ChEBI" id="CHEBI:15377"/>
        <dbReference type="ChEBI" id="CHEBI:28938"/>
        <dbReference type="ChEBI" id="CHEBI:29985"/>
        <dbReference type="ChEBI" id="CHEBI:58359"/>
        <dbReference type="EC" id="3.5.1.2"/>
    </reaction>
</comment>
<comment type="pathway">
    <text evidence="1">Purine metabolism; IMP biosynthesis via de novo pathway; 5-amino-1-(5-phospho-D-ribosyl)imidazole from N(2)-formyl-N(1)-(5-phospho-D-ribosyl)glycinamide: step 1/2.</text>
</comment>
<comment type="subunit">
    <text evidence="1">Part of the FGAM synthase complex composed of 1 PurL, 1 PurQ and 2 PurS subunits.</text>
</comment>
<comment type="subcellular location">
    <subcellularLocation>
        <location evidence="1">Cytoplasm</location>
    </subcellularLocation>
</comment>
<keyword id="KW-0067">ATP-binding</keyword>
<keyword id="KW-0963">Cytoplasm</keyword>
<keyword id="KW-0315">Glutamine amidotransferase</keyword>
<keyword id="KW-0378">Hydrolase</keyword>
<keyword id="KW-0436">Ligase</keyword>
<keyword id="KW-0547">Nucleotide-binding</keyword>
<keyword id="KW-0658">Purine biosynthesis</keyword>
<keyword id="KW-1185">Reference proteome</keyword>
<organism>
    <name type="scientific">Prochlorococcus marinus (strain SARG / CCMP1375 / SS120)</name>
    <dbReference type="NCBI Taxonomy" id="167539"/>
    <lineage>
        <taxon>Bacteria</taxon>
        <taxon>Bacillati</taxon>
        <taxon>Cyanobacteriota</taxon>
        <taxon>Cyanophyceae</taxon>
        <taxon>Synechococcales</taxon>
        <taxon>Prochlorococcaceae</taxon>
        <taxon>Prochlorococcus</taxon>
    </lineage>
</organism>
<gene>
    <name evidence="1" type="primary">purQ</name>
    <name type="ordered locus">Pro_0854</name>
</gene>
<accession>Q7VC88</accession>
<sequence>MTIGIVVFPGSNCDRDVHWATQGCLGMSTRFLWHESTDLNGLEAVVLPGGFSYGDYLRCGAIARFAPVLSSLLEFVNKGGKVLGICNGFQILTELGLLPGALTRNQELHFICDTVPLLISSQRTQWFKNYNQSKNIFLPIAHGEGRYQCSESILKKLQDEDSIALKYKNNPNGSINDIAAITNKSGNVLGMMPHPERAADKDIGGIDGIKILQALLSN</sequence>
<reference key="1">
    <citation type="journal article" date="2003" name="Proc. Natl. Acad. Sci. U.S.A.">
        <title>Genome sequence of the cyanobacterium Prochlorococcus marinus SS120, a nearly minimal oxyphototrophic genome.</title>
        <authorList>
            <person name="Dufresne A."/>
            <person name="Salanoubat M."/>
            <person name="Partensky F."/>
            <person name="Artiguenave F."/>
            <person name="Axmann I.M."/>
            <person name="Barbe V."/>
            <person name="Duprat S."/>
            <person name="Galperin M.Y."/>
            <person name="Koonin E.V."/>
            <person name="Le Gall F."/>
            <person name="Makarova K.S."/>
            <person name="Ostrowski M."/>
            <person name="Oztas S."/>
            <person name="Robert C."/>
            <person name="Rogozin I.B."/>
            <person name="Scanlan D.J."/>
            <person name="Tandeau de Marsac N."/>
            <person name="Weissenbach J."/>
            <person name="Wincker P."/>
            <person name="Wolf Y.I."/>
            <person name="Hess W.R."/>
        </authorList>
    </citation>
    <scope>NUCLEOTIDE SEQUENCE [LARGE SCALE GENOMIC DNA]</scope>
    <source>
        <strain>SARG / CCMP1375 / SS120</strain>
    </source>
</reference>
<name>PURQ_PROMA</name>
<protein>
    <recommendedName>
        <fullName evidence="1">Phosphoribosylformylglycinamidine synthase subunit PurQ</fullName>
        <shortName evidence="1">FGAM synthase</shortName>
        <ecNumber evidence="1">6.3.5.3</ecNumber>
    </recommendedName>
    <alternativeName>
        <fullName evidence="1">Formylglycinamide ribonucleotide amidotransferase subunit I</fullName>
        <shortName evidence="1">FGAR amidotransferase I</shortName>
        <shortName evidence="1">FGAR-AT I</shortName>
    </alternativeName>
    <alternativeName>
        <fullName evidence="1">Glutaminase PurQ</fullName>
        <ecNumber evidence="1">3.5.1.2</ecNumber>
    </alternativeName>
    <alternativeName>
        <fullName evidence="1">Phosphoribosylformylglycinamidine synthase subunit I</fullName>
    </alternativeName>
</protein>
<feature type="chain" id="PRO_0000100576" description="Phosphoribosylformylglycinamidine synthase subunit PurQ">
    <location>
        <begin position="1"/>
        <end position="218"/>
    </location>
</feature>
<feature type="domain" description="Glutamine amidotransferase type-1" evidence="1">
    <location>
        <begin position="2"/>
        <end position="218"/>
    </location>
</feature>
<feature type="active site" description="Nucleophile" evidence="1">
    <location>
        <position position="86"/>
    </location>
</feature>
<feature type="active site" evidence="1">
    <location>
        <position position="194"/>
    </location>
</feature>
<feature type="active site" evidence="1">
    <location>
        <position position="196"/>
    </location>
</feature>
<evidence type="ECO:0000255" key="1">
    <source>
        <dbReference type="HAMAP-Rule" id="MF_00421"/>
    </source>
</evidence>
<proteinExistence type="inferred from homology"/>
<dbReference type="EC" id="6.3.5.3" evidence="1"/>
<dbReference type="EC" id="3.5.1.2" evidence="1"/>
<dbReference type="EMBL" id="AE017126">
    <property type="protein sequence ID" value="AAP99898.1"/>
    <property type="molecule type" value="Genomic_DNA"/>
</dbReference>
<dbReference type="RefSeq" id="NP_875246.1">
    <property type="nucleotide sequence ID" value="NC_005042.1"/>
</dbReference>
<dbReference type="RefSeq" id="WP_011125006.1">
    <property type="nucleotide sequence ID" value="NC_005042.1"/>
</dbReference>
<dbReference type="SMR" id="Q7VC88"/>
<dbReference type="STRING" id="167539.Pro_0854"/>
<dbReference type="EnsemblBacteria" id="AAP99898">
    <property type="protein sequence ID" value="AAP99898"/>
    <property type="gene ID" value="Pro_0854"/>
</dbReference>
<dbReference type="KEGG" id="pma:Pro_0854"/>
<dbReference type="PATRIC" id="fig|167539.5.peg.903"/>
<dbReference type="eggNOG" id="COG0047">
    <property type="taxonomic scope" value="Bacteria"/>
</dbReference>
<dbReference type="HOGENOM" id="CLU_001031_3_1_3"/>
<dbReference type="OrthoDB" id="9804441at2"/>
<dbReference type="UniPathway" id="UPA00074">
    <property type="reaction ID" value="UER00128"/>
</dbReference>
<dbReference type="Proteomes" id="UP000001420">
    <property type="component" value="Chromosome"/>
</dbReference>
<dbReference type="GO" id="GO:0005737">
    <property type="term" value="C:cytoplasm"/>
    <property type="evidence" value="ECO:0007669"/>
    <property type="project" value="UniProtKB-SubCell"/>
</dbReference>
<dbReference type="GO" id="GO:0005524">
    <property type="term" value="F:ATP binding"/>
    <property type="evidence" value="ECO:0007669"/>
    <property type="project" value="UniProtKB-KW"/>
</dbReference>
<dbReference type="GO" id="GO:0004359">
    <property type="term" value="F:glutaminase activity"/>
    <property type="evidence" value="ECO:0007669"/>
    <property type="project" value="UniProtKB-EC"/>
</dbReference>
<dbReference type="GO" id="GO:0004642">
    <property type="term" value="F:phosphoribosylformylglycinamidine synthase activity"/>
    <property type="evidence" value="ECO:0007669"/>
    <property type="project" value="UniProtKB-UniRule"/>
</dbReference>
<dbReference type="GO" id="GO:0006189">
    <property type="term" value="P:'de novo' IMP biosynthetic process"/>
    <property type="evidence" value="ECO:0007669"/>
    <property type="project" value="UniProtKB-UniRule"/>
</dbReference>
<dbReference type="CDD" id="cd01740">
    <property type="entry name" value="GATase1_FGAR_AT"/>
    <property type="match status" value="1"/>
</dbReference>
<dbReference type="Gene3D" id="3.40.50.880">
    <property type="match status" value="1"/>
</dbReference>
<dbReference type="HAMAP" id="MF_00421">
    <property type="entry name" value="PurQ"/>
    <property type="match status" value="1"/>
</dbReference>
<dbReference type="InterPro" id="IPR029062">
    <property type="entry name" value="Class_I_gatase-like"/>
</dbReference>
<dbReference type="InterPro" id="IPR010075">
    <property type="entry name" value="PRibForGlyAmidine_synth_PurQ"/>
</dbReference>
<dbReference type="NCBIfam" id="TIGR01737">
    <property type="entry name" value="FGAM_synth_I"/>
    <property type="match status" value="1"/>
</dbReference>
<dbReference type="NCBIfam" id="NF002957">
    <property type="entry name" value="PRK03619.1"/>
    <property type="match status" value="1"/>
</dbReference>
<dbReference type="PANTHER" id="PTHR47552">
    <property type="entry name" value="PHOSPHORIBOSYLFORMYLGLYCINAMIDINE SYNTHASE SUBUNIT PURQ"/>
    <property type="match status" value="1"/>
</dbReference>
<dbReference type="PANTHER" id="PTHR47552:SF1">
    <property type="entry name" value="PHOSPHORIBOSYLFORMYLGLYCINAMIDINE SYNTHASE SUBUNIT PURQ"/>
    <property type="match status" value="1"/>
</dbReference>
<dbReference type="Pfam" id="PF13507">
    <property type="entry name" value="GATase_5"/>
    <property type="match status" value="1"/>
</dbReference>
<dbReference type="PIRSF" id="PIRSF001586">
    <property type="entry name" value="FGAM_synth_I"/>
    <property type="match status" value="1"/>
</dbReference>
<dbReference type="SMART" id="SM01211">
    <property type="entry name" value="GATase_5"/>
    <property type="match status" value="1"/>
</dbReference>
<dbReference type="SUPFAM" id="SSF52317">
    <property type="entry name" value="Class I glutamine amidotransferase-like"/>
    <property type="match status" value="1"/>
</dbReference>
<dbReference type="PROSITE" id="PS51273">
    <property type="entry name" value="GATASE_TYPE_1"/>
    <property type="match status" value="1"/>
</dbReference>